<protein>
    <recommendedName>
        <fullName>Multidrug resistance ABC transporter ATP-binding and permease protein</fullName>
        <ecNumber>7.6.2.2</ecNumber>
    </recommendedName>
</protein>
<name>LMRA_LACLM</name>
<reference key="1">
    <citation type="journal article" date="1996" name="Proc. Natl. Acad. Sci. U.S.A.">
        <title>Multidrug resistance mediated by a bacterial homolog of the human multidrug transporter MDR1.</title>
        <authorList>
            <person name="van Veen H.W."/>
            <person name="Venema K."/>
            <person name="Bolhuis H."/>
            <person name="Oussenko I."/>
            <person name="Kok J."/>
            <person name="Poolman B."/>
            <person name="Driessen A.J."/>
            <person name="Konings W.N."/>
        </authorList>
    </citation>
    <scope>NUCLEOTIDE SEQUENCE [GENOMIC DNA]</scope>
</reference>
<reference key="2">
    <citation type="journal article" date="2007" name="J. Bacteriol.">
        <title>The complete genome sequence of the lactic acid bacterial paradigm Lactococcus lactis subsp. cremoris MG1363.</title>
        <authorList>
            <person name="Wegmann U."/>
            <person name="O'Connell-Motherway M."/>
            <person name="Zomer A."/>
            <person name="Buist G."/>
            <person name="Shearman C."/>
            <person name="Canchaya C."/>
            <person name="Ventura M."/>
            <person name="Goesmann A."/>
            <person name="Gasson M.J."/>
            <person name="Kuipers O.P."/>
            <person name="van Sinderen D."/>
            <person name="Kok J."/>
        </authorList>
    </citation>
    <scope>NUCLEOTIDE SEQUENCE [LARGE SCALE GENOMIC DNA]</scope>
    <source>
        <strain>MG1363</strain>
    </source>
</reference>
<evidence type="ECO:0000255" key="1">
    <source>
        <dbReference type="PROSITE-ProRule" id="PRU00434"/>
    </source>
</evidence>
<evidence type="ECO:0000255" key="2">
    <source>
        <dbReference type="PROSITE-ProRule" id="PRU00441"/>
    </source>
</evidence>
<evidence type="ECO:0000305" key="3"/>
<keyword id="KW-0046">Antibiotic resistance</keyword>
<keyword id="KW-0067">ATP-binding</keyword>
<keyword id="KW-1003">Cell membrane</keyword>
<keyword id="KW-0472">Membrane</keyword>
<keyword id="KW-0547">Nucleotide-binding</keyword>
<keyword id="KW-1278">Translocase</keyword>
<keyword id="KW-0812">Transmembrane</keyword>
<keyword id="KW-1133">Transmembrane helix</keyword>
<keyword id="KW-0813">Transport</keyword>
<organism>
    <name type="scientific">Lactococcus lactis subsp. cremoris (strain MG1363)</name>
    <dbReference type="NCBI Taxonomy" id="416870"/>
    <lineage>
        <taxon>Bacteria</taxon>
        <taxon>Bacillati</taxon>
        <taxon>Bacillota</taxon>
        <taxon>Bacilli</taxon>
        <taxon>Lactobacillales</taxon>
        <taxon>Streptococcaceae</taxon>
        <taxon>Lactococcus</taxon>
        <taxon>Lactococcus cremoris subsp. cremoris</taxon>
    </lineage>
</organism>
<dbReference type="EC" id="7.6.2.2"/>
<dbReference type="EMBL" id="U63741">
    <property type="protein sequence ID" value="AAB49750.1"/>
    <property type="molecule type" value="Genomic_DNA"/>
</dbReference>
<dbReference type="EMBL" id="AM406671">
    <property type="protein sequence ID" value="CAL98427.1"/>
    <property type="molecule type" value="Genomic_DNA"/>
</dbReference>
<dbReference type="BMRB" id="P97046"/>
<dbReference type="SMR" id="P97046"/>
<dbReference type="STRING" id="416870.llmg_1856"/>
<dbReference type="TCDB" id="3.A.1.117.1">
    <property type="family name" value="the atp-binding cassette (abc) superfamily"/>
</dbReference>
<dbReference type="KEGG" id="llm:llmg_1856"/>
<dbReference type="eggNOG" id="COG1132">
    <property type="taxonomic scope" value="Bacteria"/>
</dbReference>
<dbReference type="HOGENOM" id="CLU_000604_84_3_9"/>
<dbReference type="PhylomeDB" id="P97046"/>
<dbReference type="BRENDA" id="7.6.2.2">
    <property type="organism ID" value="2903"/>
</dbReference>
<dbReference type="Proteomes" id="UP000000364">
    <property type="component" value="Chromosome"/>
</dbReference>
<dbReference type="GO" id="GO:0005886">
    <property type="term" value="C:plasma membrane"/>
    <property type="evidence" value="ECO:0007669"/>
    <property type="project" value="UniProtKB-SubCell"/>
</dbReference>
<dbReference type="GO" id="GO:0015421">
    <property type="term" value="F:ABC-type oligopeptide transporter activity"/>
    <property type="evidence" value="ECO:0007669"/>
    <property type="project" value="TreeGrafter"/>
</dbReference>
<dbReference type="GO" id="GO:0008559">
    <property type="term" value="F:ABC-type xenobiotic transporter activity"/>
    <property type="evidence" value="ECO:0007669"/>
    <property type="project" value="UniProtKB-EC"/>
</dbReference>
<dbReference type="GO" id="GO:0005524">
    <property type="term" value="F:ATP binding"/>
    <property type="evidence" value="ECO:0007669"/>
    <property type="project" value="UniProtKB-KW"/>
</dbReference>
<dbReference type="GO" id="GO:0016887">
    <property type="term" value="F:ATP hydrolysis activity"/>
    <property type="evidence" value="ECO:0007669"/>
    <property type="project" value="InterPro"/>
</dbReference>
<dbReference type="GO" id="GO:0046677">
    <property type="term" value="P:response to antibiotic"/>
    <property type="evidence" value="ECO:0007669"/>
    <property type="project" value="UniProtKB-KW"/>
</dbReference>
<dbReference type="CDD" id="cd18551">
    <property type="entry name" value="ABC_6TM_LmrA_like"/>
    <property type="match status" value="1"/>
</dbReference>
<dbReference type="FunFam" id="3.40.50.300:FF:000218">
    <property type="entry name" value="Multidrug ABC transporter ATP-binding protein"/>
    <property type="match status" value="1"/>
</dbReference>
<dbReference type="Gene3D" id="1.20.1560.10">
    <property type="entry name" value="ABC transporter type 1, transmembrane domain"/>
    <property type="match status" value="1"/>
</dbReference>
<dbReference type="Gene3D" id="3.40.50.300">
    <property type="entry name" value="P-loop containing nucleotide triphosphate hydrolases"/>
    <property type="match status" value="1"/>
</dbReference>
<dbReference type="InterPro" id="IPR003593">
    <property type="entry name" value="AAA+_ATPase"/>
</dbReference>
<dbReference type="InterPro" id="IPR011527">
    <property type="entry name" value="ABC1_TM_dom"/>
</dbReference>
<dbReference type="InterPro" id="IPR036640">
    <property type="entry name" value="ABC1_TM_sf"/>
</dbReference>
<dbReference type="InterPro" id="IPR003439">
    <property type="entry name" value="ABC_transporter-like_ATP-bd"/>
</dbReference>
<dbReference type="InterPro" id="IPR017871">
    <property type="entry name" value="ABC_transporter-like_CS"/>
</dbReference>
<dbReference type="InterPro" id="IPR027417">
    <property type="entry name" value="P-loop_NTPase"/>
</dbReference>
<dbReference type="InterPro" id="IPR039421">
    <property type="entry name" value="Type_1_exporter"/>
</dbReference>
<dbReference type="PANTHER" id="PTHR43394:SF1">
    <property type="entry name" value="ATP-BINDING CASSETTE SUB-FAMILY B MEMBER 10, MITOCHONDRIAL"/>
    <property type="match status" value="1"/>
</dbReference>
<dbReference type="PANTHER" id="PTHR43394">
    <property type="entry name" value="ATP-DEPENDENT PERMEASE MDL1, MITOCHONDRIAL"/>
    <property type="match status" value="1"/>
</dbReference>
<dbReference type="Pfam" id="PF00664">
    <property type="entry name" value="ABC_membrane"/>
    <property type="match status" value="1"/>
</dbReference>
<dbReference type="Pfam" id="PF00005">
    <property type="entry name" value="ABC_tran"/>
    <property type="match status" value="1"/>
</dbReference>
<dbReference type="SMART" id="SM00382">
    <property type="entry name" value="AAA"/>
    <property type="match status" value="1"/>
</dbReference>
<dbReference type="SUPFAM" id="SSF90123">
    <property type="entry name" value="ABC transporter transmembrane region"/>
    <property type="match status" value="1"/>
</dbReference>
<dbReference type="SUPFAM" id="SSF52540">
    <property type="entry name" value="P-loop containing nucleoside triphosphate hydrolases"/>
    <property type="match status" value="1"/>
</dbReference>
<dbReference type="PROSITE" id="PS50929">
    <property type="entry name" value="ABC_TM1F"/>
    <property type="match status" value="1"/>
</dbReference>
<dbReference type="PROSITE" id="PS00211">
    <property type="entry name" value="ABC_TRANSPORTER_1"/>
    <property type="match status" value="1"/>
</dbReference>
<dbReference type="PROSITE" id="PS50893">
    <property type="entry name" value="ABC_TRANSPORTER_2"/>
    <property type="match status" value="1"/>
</dbReference>
<sequence length="590" mass="64617">MERGPQMANRIEGKAVDKTSIKHFVKLIRAAKPRYLFFVIGIVAGIIGTLIQLQVPKMVQPLINSFGHGVNGGKVALVIALYIGSAAVSAIAAIVLGIFGESVVKNLRTRVWDKMIHLPVKYFDEVKTGEMSSRLANDTTQVKNLIANSIPQAFTSILLLVGSIIFMLQMQWRLTLAMIIAVPIVMLIMFPIMTFGQKIGWTRQDSLANFQGIASESLSEIRLVKSSNAEKQASKKAENDVNALYKIGVKEAVFDGLMSPVMMLSMMLMIFGLLAYGIYLISTGVMSLGTLLGMMMYLMNLIGVVPTVATFFTELAKASGSTGRLTELLDEEQEVLHQGDSLDLEGKTLSAHHVDFAYDDSEQILHDISFEAQPNSIIAFAGPSGGGKSTIFSLLERFYQPTAGEITIGGQPIDSVSLENWRSQIGFVSQDSAIMAGTIRENLTYGLEGNFTDEDLWQVLDLAFARSFVENMPDQLNTEVGERGVKISGGQRQRLAIARAFLRNPKILMLDEATASLDSESESMVQRALDSLMKGRTTLVIAHRLSTIVDADKIYFIEKGEITGSGKHNELVATHPLYAKYVSEQLTVGQ</sequence>
<accession>P97046</accession>
<accession>A2RMA0</accession>
<feature type="chain" id="PRO_0000092414" description="Multidrug resistance ABC transporter ATP-binding and permease protein">
    <location>
        <begin position="1"/>
        <end position="590"/>
    </location>
</feature>
<feature type="transmembrane region" description="Helical" evidence="2">
    <location>
        <begin position="35"/>
        <end position="55"/>
    </location>
</feature>
<feature type="transmembrane region" description="Helical" evidence="2">
    <location>
        <begin position="79"/>
        <end position="99"/>
    </location>
</feature>
<feature type="transmembrane region" description="Helical" evidence="2">
    <location>
        <begin position="150"/>
        <end position="170"/>
    </location>
</feature>
<feature type="transmembrane region" description="Helical" evidence="2">
    <location>
        <begin position="176"/>
        <end position="196"/>
    </location>
</feature>
<feature type="transmembrane region" description="Helical" evidence="2">
    <location>
        <begin position="261"/>
        <end position="281"/>
    </location>
</feature>
<feature type="transmembrane region" description="Helical" evidence="2">
    <location>
        <begin position="292"/>
        <end position="312"/>
    </location>
</feature>
<feature type="domain" description="ABC transmembrane type-1" evidence="2">
    <location>
        <begin position="38"/>
        <end position="317"/>
    </location>
</feature>
<feature type="domain" description="ABC transporter" evidence="1">
    <location>
        <begin position="349"/>
        <end position="584"/>
    </location>
</feature>
<feature type="binding site" evidence="1">
    <location>
        <begin position="382"/>
        <end position="389"/>
    </location>
    <ligand>
        <name>ATP</name>
        <dbReference type="ChEBI" id="CHEBI:30616"/>
    </ligand>
</feature>
<gene>
    <name type="primary">lmrA</name>
    <name type="ordered locus">llmg_1856</name>
</gene>
<proteinExistence type="inferred from homology"/>
<comment type="function">
    <text>Efflux transporter for a variety of amphiphilic cationic compounds, including antibiotics.</text>
</comment>
<comment type="catalytic activity">
    <reaction>
        <text>ATP + H2O + xenobioticSide 1 = ADP + phosphate + xenobioticSide 2.</text>
        <dbReference type="EC" id="7.6.2.2"/>
    </reaction>
</comment>
<comment type="subunit">
    <text evidence="3">Homodimer.</text>
</comment>
<comment type="subcellular location">
    <subcellularLocation>
        <location evidence="3">Cell membrane</location>
        <topology evidence="3">Multi-pass membrane protein</topology>
    </subcellularLocation>
</comment>
<comment type="similarity">
    <text evidence="3">Belongs to the ABC transporter superfamily. Multidrug exporter LmrA (TC 3.A.1.117.1) family.</text>
</comment>